<dbReference type="EMBL" id="EU926109">
    <property type="protein sequence ID" value="ACI41441.1"/>
    <property type="molecule type" value="mRNA"/>
</dbReference>
<dbReference type="EMBL" id="FM864113">
    <property type="protein sequence ID" value="CAS03710.1"/>
    <property type="molecule type" value="mRNA"/>
</dbReference>
<dbReference type="SMR" id="B6DD25"/>
<dbReference type="ArachnoServer" id="AS001048">
    <property type="toxin name" value="U13-lycotoxin-Ls1f"/>
</dbReference>
<dbReference type="GO" id="GO:0005576">
    <property type="term" value="C:extracellular region"/>
    <property type="evidence" value="ECO:0007669"/>
    <property type="project" value="UniProtKB-SubCell"/>
</dbReference>
<dbReference type="GO" id="GO:0090729">
    <property type="term" value="F:toxin activity"/>
    <property type="evidence" value="ECO:0007669"/>
    <property type="project" value="UniProtKB-KW"/>
</dbReference>
<protein>
    <recommendedName>
        <fullName>U13-lycotoxin-Ls1f</fullName>
    </recommendedName>
    <alternativeName>
        <fullName>Toxin-like structure LSTX-L7</fullName>
    </alternativeName>
</protein>
<proteinExistence type="evidence at transcript level"/>
<feature type="signal peptide" evidence="2">
    <location>
        <begin position="1"/>
        <end position="16"/>
    </location>
</feature>
<feature type="propeptide" id="PRO_0000401869" evidence="1">
    <location>
        <begin position="17"/>
        <end position="54"/>
    </location>
</feature>
<feature type="chain" id="PRO_0000401870" description="U13-lycotoxin-Ls1f">
    <location>
        <begin position="55"/>
        <end position="120"/>
    </location>
</feature>
<feature type="domain" description="Agouti">
    <location>
        <begin position="56"/>
        <end position="95"/>
    </location>
</feature>
<feature type="disulfide bond" evidence="1">
    <location>
        <begin position="56"/>
        <end position="70"/>
    </location>
</feature>
<feature type="disulfide bond" evidence="1">
    <location>
        <begin position="63"/>
        <end position="76"/>
    </location>
</feature>
<feature type="disulfide bond" evidence="1">
    <location>
        <begin position="69"/>
        <end position="87"/>
    </location>
</feature>
<feature type="disulfide bond" evidence="1">
    <location>
        <begin position="78"/>
        <end position="85"/>
    </location>
</feature>
<name>TXD07_LYCSI</name>
<accession>B6DD25</accession>
<keyword id="KW-1015">Disulfide bond</keyword>
<keyword id="KW-0960">Knottin</keyword>
<keyword id="KW-0964">Secreted</keyword>
<keyword id="KW-0732">Signal</keyword>
<keyword id="KW-0800">Toxin</keyword>
<evidence type="ECO:0000250" key="1"/>
<evidence type="ECO:0000255" key="2"/>
<evidence type="ECO:0000305" key="3"/>
<organism>
    <name type="scientific">Lycosa singoriensis</name>
    <name type="common">Wolf spider</name>
    <name type="synonym">Aranea singoriensis</name>
    <dbReference type="NCBI Taxonomy" id="434756"/>
    <lineage>
        <taxon>Eukaryota</taxon>
        <taxon>Metazoa</taxon>
        <taxon>Ecdysozoa</taxon>
        <taxon>Arthropoda</taxon>
        <taxon>Chelicerata</taxon>
        <taxon>Arachnida</taxon>
        <taxon>Araneae</taxon>
        <taxon>Araneomorphae</taxon>
        <taxon>Entelegynae</taxon>
        <taxon>Lycosoidea</taxon>
        <taxon>Lycosidae</taxon>
        <taxon>Lycosa</taxon>
    </lineage>
</organism>
<reference key="1">
    <citation type="journal article" date="2010" name="Zoology">
        <title>Transcriptome analysis of the venom glands of the Chinese wolf spider Lycosa singoriensis.</title>
        <authorList>
            <person name="Zhang Y."/>
            <person name="Chen J."/>
            <person name="Tang X."/>
            <person name="Wang F."/>
            <person name="Jiang L."/>
            <person name="Xiong X."/>
            <person name="Wang M."/>
            <person name="Rong M."/>
            <person name="Liu Z."/>
            <person name="Liang S."/>
        </authorList>
    </citation>
    <scope>NUCLEOTIDE SEQUENCE [LARGE SCALE MRNA]</scope>
    <source>
        <tissue>Venom gland</tissue>
    </source>
</reference>
<comment type="subcellular location">
    <subcellularLocation>
        <location evidence="1">Secreted</location>
    </subcellularLocation>
</comment>
<comment type="tissue specificity">
    <text>Expressed by the venom gland.</text>
</comment>
<comment type="domain">
    <text evidence="1">The presence of a 'disulfide through disulfide kOR' structurally defines this protein as a knottin.</text>
</comment>
<comment type="PTM">
    <text evidence="3">Contains 6 disulfide bonds.</text>
</comment>
<comment type="similarity">
    <text evidence="3">Belongs to the neurotoxin 05 (agouti) family.</text>
</comment>
<sequence>MKILFVLISILYAVYCFSSEEDVDSAYLANELEPVEDINSEQYAALEPKEEQERSCAGMGQDCKDDCDCCLNIATCNCWFGRYFCSCTFGDYQTCLRKKGKCKRNRPQSCPRSNLNRKKG</sequence>